<proteinExistence type="inferred from homology"/>
<comment type="function">
    <text evidence="1">Binds to sigma F and blocks its ability to form an RNA polymerase holoenzyme (E-sigma F). Phosphorylates SpoIIAA on a serine residue. This phosphorylation may enable SpoIIAA to act as an anti-anti-sigma factor that counteracts SpoIIAB and thus releases sigma F from inhibition.</text>
</comment>
<comment type="catalytic activity">
    <reaction evidence="1">
        <text>L-seryl-[protein] + ATP = O-phospho-L-seryl-[protein] + ADP + H(+)</text>
        <dbReference type="Rhea" id="RHEA:17989"/>
        <dbReference type="Rhea" id="RHEA-COMP:9863"/>
        <dbReference type="Rhea" id="RHEA-COMP:11604"/>
        <dbReference type="ChEBI" id="CHEBI:15378"/>
        <dbReference type="ChEBI" id="CHEBI:29999"/>
        <dbReference type="ChEBI" id="CHEBI:30616"/>
        <dbReference type="ChEBI" id="CHEBI:83421"/>
        <dbReference type="ChEBI" id="CHEBI:456216"/>
        <dbReference type="EC" id="2.7.11.1"/>
    </reaction>
</comment>
<comment type="catalytic activity">
    <reaction evidence="1">
        <text>L-threonyl-[protein] + ATP = O-phospho-L-threonyl-[protein] + ADP + H(+)</text>
        <dbReference type="Rhea" id="RHEA:46608"/>
        <dbReference type="Rhea" id="RHEA-COMP:11060"/>
        <dbReference type="Rhea" id="RHEA-COMP:11605"/>
        <dbReference type="ChEBI" id="CHEBI:15378"/>
        <dbReference type="ChEBI" id="CHEBI:30013"/>
        <dbReference type="ChEBI" id="CHEBI:30616"/>
        <dbReference type="ChEBI" id="CHEBI:61977"/>
        <dbReference type="ChEBI" id="CHEBI:456216"/>
        <dbReference type="EC" id="2.7.11.1"/>
    </reaction>
</comment>
<comment type="similarity">
    <text evidence="1">Belongs to the anti-sigma-factor family.</text>
</comment>
<evidence type="ECO:0000255" key="1">
    <source>
        <dbReference type="HAMAP-Rule" id="MF_00637"/>
    </source>
</evidence>
<feature type="chain" id="PRO_0000203568" description="Anti-sigma F factor">
    <location>
        <begin position="1"/>
        <end position="150"/>
    </location>
</feature>
<accession>P59624</accession>
<reference key="1">
    <citation type="submission" date="2002-02" db="EMBL/GenBank/DDBJ databases">
        <title>Identification of Pasteuria penetrans sporulation genes.</title>
        <authorList>
            <person name="Nong G."/>
            <person name="Preston J.F."/>
        </authorList>
    </citation>
    <scope>NUCLEOTIDE SEQUENCE [GENOMIC DNA]</scope>
</reference>
<name>SP2AB_PASPE</name>
<gene>
    <name evidence="1" type="primary">spoIIAB</name>
</gene>
<protein>
    <recommendedName>
        <fullName evidence="1">Anti-sigma F factor</fullName>
        <ecNumber evidence="1">2.7.11.1</ecNumber>
    </recommendedName>
    <alternativeName>
        <fullName evidence="1">Stage II sporulation protein AB</fullName>
    </alternativeName>
</protein>
<dbReference type="EC" id="2.7.11.1" evidence="1"/>
<dbReference type="EMBL" id="AF483656">
    <property type="protein sequence ID" value="AAO63809.1"/>
    <property type="molecule type" value="Genomic_DNA"/>
</dbReference>
<dbReference type="RefSeq" id="WP_149454451.1">
    <property type="nucleotide sequence ID" value="NZ_UZAC03000003.1"/>
</dbReference>
<dbReference type="SMR" id="P59624"/>
<dbReference type="OrthoDB" id="9768808at2"/>
<dbReference type="GO" id="GO:0005524">
    <property type="term" value="F:ATP binding"/>
    <property type="evidence" value="ECO:0007669"/>
    <property type="project" value="UniProtKB-KW"/>
</dbReference>
<dbReference type="GO" id="GO:0106310">
    <property type="term" value="F:protein serine kinase activity"/>
    <property type="evidence" value="ECO:0007669"/>
    <property type="project" value="RHEA"/>
</dbReference>
<dbReference type="GO" id="GO:0004674">
    <property type="term" value="F:protein serine/threonine kinase activity"/>
    <property type="evidence" value="ECO:0007669"/>
    <property type="project" value="UniProtKB-KW"/>
</dbReference>
<dbReference type="GO" id="GO:0016989">
    <property type="term" value="F:sigma factor antagonist activity"/>
    <property type="evidence" value="ECO:0007669"/>
    <property type="project" value="InterPro"/>
</dbReference>
<dbReference type="GO" id="GO:0030436">
    <property type="term" value="P:asexual sporulation"/>
    <property type="evidence" value="ECO:0007669"/>
    <property type="project" value="UniProtKB-UniRule"/>
</dbReference>
<dbReference type="GO" id="GO:0042174">
    <property type="term" value="P:negative regulation of sporulation resulting in formation of a cellular spore"/>
    <property type="evidence" value="ECO:0007669"/>
    <property type="project" value="InterPro"/>
</dbReference>
<dbReference type="GO" id="GO:0030435">
    <property type="term" value="P:sporulation resulting in formation of a cellular spore"/>
    <property type="evidence" value="ECO:0007669"/>
    <property type="project" value="UniProtKB-KW"/>
</dbReference>
<dbReference type="CDD" id="cd16942">
    <property type="entry name" value="HATPase_SpoIIAB-like"/>
    <property type="match status" value="1"/>
</dbReference>
<dbReference type="Gene3D" id="3.30.565.10">
    <property type="entry name" value="Histidine kinase-like ATPase, C-terminal domain"/>
    <property type="match status" value="1"/>
</dbReference>
<dbReference type="HAMAP" id="MF_00637">
    <property type="entry name" value="Anti_sigma_F"/>
    <property type="match status" value="1"/>
</dbReference>
<dbReference type="InterPro" id="IPR050267">
    <property type="entry name" value="Anti-sigma-factor_SerPK"/>
</dbReference>
<dbReference type="InterPro" id="IPR010194">
    <property type="entry name" value="Anti-sigma_F"/>
</dbReference>
<dbReference type="InterPro" id="IPR036890">
    <property type="entry name" value="HATPase_C_sf"/>
</dbReference>
<dbReference type="NCBIfam" id="TIGR01925">
    <property type="entry name" value="spIIAB"/>
    <property type="match status" value="1"/>
</dbReference>
<dbReference type="PANTHER" id="PTHR35526:SF3">
    <property type="entry name" value="ANTI-SIGMA-F FACTOR RSBW"/>
    <property type="match status" value="1"/>
</dbReference>
<dbReference type="PANTHER" id="PTHR35526">
    <property type="entry name" value="ANTI-SIGMA-F FACTOR RSBW-RELATED"/>
    <property type="match status" value="1"/>
</dbReference>
<dbReference type="Pfam" id="PF13581">
    <property type="entry name" value="HATPase_c_2"/>
    <property type="match status" value="1"/>
</dbReference>
<dbReference type="SMART" id="SM00387">
    <property type="entry name" value="HATPase_c"/>
    <property type="match status" value="1"/>
</dbReference>
<dbReference type="SUPFAM" id="SSF55874">
    <property type="entry name" value="ATPase domain of HSP90 chaperone/DNA topoisomerase II/histidine kinase"/>
    <property type="match status" value="1"/>
</dbReference>
<keyword id="KW-0067">ATP-binding</keyword>
<keyword id="KW-0418">Kinase</keyword>
<keyword id="KW-0547">Nucleotide-binding</keyword>
<keyword id="KW-0723">Serine/threonine-protein kinase</keyword>
<keyword id="KW-0749">Sporulation</keyword>
<keyword id="KW-0808">Transferase</keyword>
<organism>
    <name type="scientific">Pasteuria penetrans</name>
    <dbReference type="NCBI Taxonomy" id="86005"/>
    <lineage>
        <taxon>Bacteria</taxon>
        <taxon>Bacillati</taxon>
        <taxon>Bacillota</taxon>
        <taxon>Bacilli</taxon>
        <taxon>Bacillales</taxon>
        <taxon>Pasteuriaceae</taxon>
        <taxon>Pasteuria</taxon>
    </lineage>
</organism>
<sequence>MKRNRMEMEFTSCSENEAFARIAVAAFVAQLDPTLEELTDIKTVVSEAVTNAVIHAYGECSEGMMVRVSVEIEDTQVAITVTDRGVGIVDVEQARQPLYTSRPEWERAGMGFSIMEHFMDQVRVRSTPGQGTVVHMIKKLQASRNVAVVN</sequence>